<comment type="function">
    <text evidence="1">SNARE promoting movement of transport vesicles to target membranes (By similarity). Potentially functions in retrograde trafficking and in the endocytic recycling pathway (By similarity).</text>
</comment>
<comment type="subcellular location">
    <subcellularLocation>
        <location evidence="4">Membrane</location>
        <topology evidence="4">Single-pass type IV membrane protein</topology>
    </subcellularLocation>
</comment>
<comment type="similarity">
    <text evidence="4">Belongs to the syntaxin family.</text>
</comment>
<accession>P83528</accession>
<name>STX6_CAEEL</name>
<keyword id="KW-0175">Coiled coil</keyword>
<keyword id="KW-0472">Membrane</keyword>
<keyword id="KW-0532">Neurotransmitter transport</keyword>
<keyword id="KW-1185">Reference proteome</keyword>
<keyword id="KW-0812">Transmembrane</keyword>
<keyword id="KW-1133">Transmembrane helix</keyword>
<keyword id="KW-0813">Transport</keyword>
<protein>
    <recommendedName>
        <fullName>Putative syntaxin 6</fullName>
    </recommendedName>
</protein>
<proteinExistence type="inferred from homology"/>
<evidence type="ECO:0000250" key="1">
    <source>
        <dbReference type="UniProtKB" id="Q63635"/>
    </source>
</evidence>
<evidence type="ECO:0000255" key="2"/>
<evidence type="ECO:0000255" key="3">
    <source>
        <dbReference type="PROSITE-ProRule" id="PRU00202"/>
    </source>
</evidence>
<evidence type="ECO:0000305" key="4"/>
<reference key="1">
    <citation type="journal article" date="1998" name="Science">
        <title>Genome sequence of the nematode C. elegans: a platform for investigating biology.</title>
        <authorList>
            <consortium name="The C. elegans sequencing consortium"/>
        </authorList>
    </citation>
    <scope>NUCLEOTIDE SEQUENCE [LARGE SCALE GENOMIC DNA]</scope>
    <source>
        <strain>Bristol N2</strain>
    </source>
</reference>
<feature type="chain" id="PRO_0000210243" description="Putative syntaxin 6">
    <location>
        <begin position="1"/>
        <end position="122"/>
    </location>
</feature>
<feature type="topological domain" description="Cytoplasmic" evidence="2">
    <location>
        <begin position="1"/>
        <end position="100"/>
    </location>
</feature>
<feature type="transmembrane region" description="Helical; Anchor for type IV membrane protein" evidence="2">
    <location>
        <begin position="101"/>
        <end position="121"/>
    </location>
</feature>
<feature type="topological domain" description="Extracellular" evidence="2">
    <location>
        <position position="122"/>
    </location>
</feature>
<feature type="domain" description="t-SNARE coiled-coil homology" evidence="3">
    <location>
        <begin position="31"/>
        <end position="93"/>
    </location>
</feature>
<gene>
    <name type="primary">syx-6</name>
    <name type="ORF">C15C7.1</name>
</gene>
<organism>
    <name type="scientific">Caenorhabditis elegans</name>
    <dbReference type="NCBI Taxonomy" id="6239"/>
    <lineage>
        <taxon>Eukaryota</taxon>
        <taxon>Metazoa</taxon>
        <taxon>Ecdysozoa</taxon>
        <taxon>Nematoda</taxon>
        <taxon>Chromadorea</taxon>
        <taxon>Rhabditida</taxon>
        <taxon>Rhabditina</taxon>
        <taxon>Rhabditomorpha</taxon>
        <taxon>Rhabditoidea</taxon>
        <taxon>Rhabditidae</taxon>
        <taxon>Peloderinae</taxon>
        <taxon>Caenorhabditis</taxon>
    </lineage>
</organism>
<sequence>MSNYRYSKLNEEEISLEDMPSSANQILTRQEQIIQEQDDELELVGNSVRTLRGMSSMIGDELDQQSTMLDDLGQEMEYSETRLDTAMKKMAKLTHLEDESSQCKMIMVLSALLFFLVFVLLV</sequence>
<dbReference type="EMBL" id="FO080550">
    <property type="protein sequence ID" value="CCD64586.1"/>
    <property type="molecule type" value="Genomic_DNA"/>
</dbReference>
<dbReference type="RefSeq" id="NP_001379673.1">
    <property type="nucleotide sequence ID" value="NM_001392741.1"/>
</dbReference>
<dbReference type="RefSeq" id="NP_508544.2">
    <property type="nucleotide sequence ID" value="NM_076143.5"/>
</dbReference>
<dbReference type="SMR" id="P83528"/>
<dbReference type="FunCoup" id="P83528">
    <property type="interactions" value="5"/>
</dbReference>
<dbReference type="STRING" id="6239.C15C7.1.1"/>
<dbReference type="PaxDb" id="6239-C15C7.1"/>
<dbReference type="PeptideAtlas" id="P83528"/>
<dbReference type="EnsemblMetazoa" id="C15C7.1.1">
    <property type="protein sequence ID" value="C15C7.1.1"/>
    <property type="gene ID" value="WBGene00015789"/>
</dbReference>
<dbReference type="GeneID" id="259698"/>
<dbReference type="UCSC" id="C15C7.1">
    <property type="organism name" value="c. elegans"/>
</dbReference>
<dbReference type="AGR" id="WB:WBGene00015789"/>
<dbReference type="WormBase" id="C15C7.1">
    <property type="protein sequence ID" value="CE30865"/>
    <property type="gene ID" value="WBGene00015789"/>
    <property type="gene designation" value="syx-6"/>
</dbReference>
<dbReference type="eggNOG" id="KOG3202">
    <property type="taxonomic scope" value="Eukaryota"/>
</dbReference>
<dbReference type="GeneTree" id="ENSGT00940000170320"/>
<dbReference type="HOGENOM" id="CLU_061883_2_1_1"/>
<dbReference type="InParanoid" id="P83528"/>
<dbReference type="OMA" id="CKMIMIL"/>
<dbReference type="OrthoDB" id="546861at2759"/>
<dbReference type="PhylomeDB" id="P83528"/>
<dbReference type="PRO" id="PR:P83528"/>
<dbReference type="Proteomes" id="UP000001940">
    <property type="component" value="Chromosome X"/>
</dbReference>
<dbReference type="Bgee" id="WBGene00015789">
    <property type="expression patterns" value="Expressed in embryo and 3 other cell types or tissues"/>
</dbReference>
<dbReference type="GO" id="GO:0000138">
    <property type="term" value="C:Golgi trans cisterna"/>
    <property type="evidence" value="ECO:0000314"/>
    <property type="project" value="WormBase"/>
</dbReference>
<dbReference type="GO" id="GO:0016020">
    <property type="term" value="C:membrane"/>
    <property type="evidence" value="ECO:0007669"/>
    <property type="project" value="UniProtKB-SubCell"/>
</dbReference>
<dbReference type="GO" id="GO:0098793">
    <property type="term" value="C:presynapse"/>
    <property type="evidence" value="ECO:0007669"/>
    <property type="project" value="GOC"/>
</dbReference>
<dbReference type="GO" id="GO:0005484">
    <property type="term" value="F:SNAP receptor activity"/>
    <property type="evidence" value="ECO:0007669"/>
    <property type="project" value="InterPro"/>
</dbReference>
<dbReference type="GO" id="GO:0006886">
    <property type="term" value="P:intracellular protein transport"/>
    <property type="evidence" value="ECO:0007669"/>
    <property type="project" value="InterPro"/>
</dbReference>
<dbReference type="GO" id="GO:0016081">
    <property type="term" value="P:synaptic vesicle docking"/>
    <property type="evidence" value="ECO:0000250"/>
    <property type="project" value="UniProtKB"/>
</dbReference>
<dbReference type="CDD" id="cd15851">
    <property type="entry name" value="SNARE_Syntaxin6"/>
    <property type="match status" value="1"/>
</dbReference>
<dbReference type="FunFam" id="1.20.5.110:FF:000006">
    <property type="entry name" value="Syntaxin 6"/>
    <property type="match status" value="1"/>
</dbReference>
<dbReference type="Gene3D" id="1.20.5.110">
    <property type="match status" value="1"/>
</dbReference>
<dbReference type="InterPro" id="IPR006012">
    <property type="entry name" value="Syntaxin/epimorphin_CS"/>
</dbReference>
<dbReference type="InterPro" id="IPR000727">
    <property type="entry name" value="T_SNARE_dom"/>
</dbReference>
<dbReference type="PANTHER" id="PTHR12791">
    <property type="entry name" value="GOLGI SNARE BET1-RELATED"/>
    <property type="match status" value="1"/>
</dbReference>
<dbReference type="Pfam" id="PF05739">
    <property type="entry name" value="SNARE"/>
    <property type="match status" value="1"/>
</dbReference>
<dbReference type="SMART" id="SM00397">
    <property type="entry name" value="t_SNARE"/>
    <property type="match status" value="1"/>
</dbReference>
<dbReference type="SUPFAM" id="SSF58038">
    <property type="entry name" value="SNARE fusion complex"/>
    <property type="match status" value="1"/>
</dbReference>
<dbReference type="PROSITE" id="PS00914">
    <property type="entry name" value="SYNTAXIN"/>
    <property type="match status" value="1"/>
</dbReference>
<dbReference type="PROSITE" id="PS50192">
    <property type="entry name" value="T_SNARE"/>
    <property type="match status" value="1"/>
</dbReference>